<feature type="chain" id="PRO_0000229974" description="Tetraacyldisaccharide 4'-kinase">
    <location>
        <begin position="1"/>
        <end position="366"/>
    </location>
</feature>
<feature type="region of interest" description="Disordered" evidence="2">
    <location>
        <begin position="343"/>
        <end position="366"/>
    </location>
</feature>
<feature type="compositionally biased region" description="Basic and acidic residues" evidence="2">
    <location>
        <begin position="356"/>
        <end position="366"/>
    </location>
</feature>
<feature type="binding site" evidence="1">
    <location>
        <begin position="65"/>
        <end position="72"/>
    </location>
    <ligand>
        <name>ATP</name>
        <dbReference type="ChEBI" id="CHEBI:30616"/>
    </ligand>
</feature>
<keyword id="KW-0067">ATP-binding</keyword>
<keyword id="KW-0418">Kinase</keyword>
<keyword id="KW-0441">Lipid A biosynthesis</keyword>
<keyword id="KW-0444">Lipid biosynthesis</keyword>
<keyword id="KW-0443">Lipid metabolism</keyword>
<keyword id="KW-0547">Nucleotide-binding</keyword>
<keyword id="KW-0808">Transferase</keyword>
<gene>
    <name evidence="1" type="primary">lpxK</name>
    <name type="ordered locus">Reut_A0593</name>
</gene>
<evidence type="ECO:0000255" key="1">
    <source>
        <dbReference type="HAMAP-Rule" id="MF_00409"/>
    </source>
</evidence>
<evidence type="ECO:0000256" key="2">
    <source>
        <dbReference type="SAM" id="MobiDB-lite"/>
    </source>
</evidence>
<name>LPXK_CUPPJ</name>
<accession>Q475F8</accession>
<dbReference type="EC" id="2.7.1.130" evidence="1"/>
<dbReference type="EMBL" id="CP000090">
    <property type="protein sequence ID" value="AAZ59975.1"/>
    <property type="molecule type" value="Genomic_DNA"/>
</dbReference>
<dbReference type="SMR" id="Q475F8"/>
<dbReference type="STRING" id="264198.Reut_A0593"/>
<dbReference type="KEGG" id="reu:Reut_A0593"/>
<dbReference type="eggNOG" id="COG1663">
    <property type="taxonomic scope" value="Bacteria"/>
</dbReference>
<dbReference type="HOGENOM" id="CLU_038816_2_0_4"/>
<dbReference type="OrthoDB" id="9766423at2"/>
<dbReference type="UniPathway" id="UPA00359">
    <property type="reaction ID" value="UER00482"/>
</dbReference>
<dbReference type="GO" id="GO:0005886">
    <property type="term" value="C:plasma membrane"/>
    <property type="evidence" value="ECO:0007669"/>
    <property type="project" value="TreeGrafter"/>
</dbReference>
<dbReference type="GO" id="GO:0005524">
    <property type="term" value="F:ATP binding"/>
    <property type="evidence" value="ECO:0007669"/>
    <property type="project" value="UniProtKB-UniRule"/>
</dbReference>
<dbReference type="GO" id="GO:0009029">
    <property type="term" value="F:tetraacyldisaccharide 4'-kinase activity"/>
    <property type="evidence" value="ECO:0007669"/>
    <property type="project" value="UniProtKB-UniRule"/>
</dbReference>
<dbReference type="GO" id="GO:0009245">
    <property type="term" value="P:lipid A biosynthetic process"/>
    <property type="evidence" value="ECO:0007669"/>
    <property type="project" value="UniProtKB-UniRule"/>
</dbReference>
<dbReference type="GO" id="GO:0009244">
    <property type="term" value="P:lipopolysaccharide core region biosynthetic process"/>
    <property type="evidence" value="ECO:0007669"/>
    <property type="project" value="TreeGrafter"/>
</dbReference>
<dbReference type="CDD" id="cd01983">
    <property type="entry name" value="SIMIBI"/>
    <property type="match status" value="1"/>
</dbReference>
<dbReference type="HAMAP" id="MF_00409">
    <property type="entry name" value="LpxK"/>
    <property type="match status" value="1"/>
</dbReference>
<dbReference type="InterPro" id="IPR003758">
    <property type="entry name" value="LpxK"/>
</dbReference>
<dbReference type="InterPro" id="IPR027417">
    <property type="entry name" value="P-loop_NTPase"/>
</dbReference>
<dbReference type="NCBIfam" id="TIGR00682">
    <property type="entry name" value="lpxK"/>
    <property type="match status" value="1"/>
</dbReference>
<dbReference type="PANTHER" id="PTHR42724">
    <property type="entry name" value="TETRAACYLDISACCHARIDE 4'-KINASE"/>
    <property type="match status" value="1"/>
</dbReference>
<dbReference type="PANTHER" id="PTHR42724:SF1">
    <property type="entry name" value="TETRAACYLDISACCHARIDE 4'-KINASE, MITOCHONDRIAL-RELATED"/>
    <property type="match status" value="1"/>
</dbReference>
<dbReference type="Pfam" id="PF02606">
    <property type="entry name" value="LpxK"/>
    <property type="match status" value="1"/>
</dbReference>
<dbReference type="SUPFAM" id="SSF52540">
    <property type="entry name" value="P-loop containing nucleoside triphosphate hydrolases"/>
    <property type="match status" value="1"/>
</dbReference>
<comment type="function">
    <text evidence="1">Transfers the gamma-phosphate of ATP to the 4'-position of a tetraacyldisaccharide 1-phosphate intermediate (termed DS-1-P) to form tetraacyldisaccharide 1,4'-bis-phosphate (lipid IVA).</text>
</comment>
<comment type="catalytic activity">
    <reaction evidence="1">
        <text>a lipid A disaccharide + ATP = a lipid IVA + ADP + H(+)</text>
        <dbReference type="Rhea" id="RHEA:67840"/>
        <dbReference type="ChEBI" id="CHEBI:15378"/>
        <dbReference type="ChEBI" id="CHEBI:30616"/>
        <dbReference type="ChEBI" id="CHEBI:176343"/>
        <dbReference type="ChEBI" id="CHEBI:176425"/>
        <dbReference type="ChEBI" id="CHEBI:456216"/>
        <dbReference type="EC" id="2.7.1.130"/>
    </reaction>
</comment>
<comment type="pathway">
    <text evidence="1">Glycolipid biosynthesis; lipid IV(A) biosynthesis; lipid IV(A) from (3R)-3-hydroxytetradecanoyl-[acyl-carrier-protein] and UDP-N-acetyl-alpha-D-glucosamine: step 6/6.</text>
</comment>
<comment type="similarity">
    <text evidence="1">Belongs to the LpxK family.</text>
</comment>
<reference key="1">
    <citation type="journal article" date="2010" name="PLoS ONE">
        <title>The complete multipartite genome sequence of Cupriavidus necator JMP134, a versatile pollutant degrader.</title>
        <authorList>
            <person name="Lykidis A."/>
            <person name="Perez-Pantoja D."/>
            <person name="Ledger T."/>
            <person name="Mavromatis K."/>
            <person name="Anderson I.J."/>
            <person name="Ivanova N.N."/>
            <person name="Hooper S.D."/>
            <person name="Lapidus A."/>
            <person name="Lucas S."/>
            <person name="Gonzalez B."/>
            <person name="Kyrpides N.C."/>
        </authorList>
    </citation>
    <scope>NUCLEOTIDE SEQUENCE [LARGE SCALE GENOMIC DNA]</scope>
    <source>
        <strain>JMP134 / LMG 1197</strain>
    </source>
</reference>
<proteinExistence type="inferred from homology"/>
<sequence>MSAPRHDLADFVTAQWQRRGWFAWLMLPFSLLFGLIARVRRYGYLHGWFKSTRLPMPVIVVGNVTVGGTGKTPAVIALAQALTEAGLRPGVVSRGYGVTLKHPRRVKPTSKASDVGDEPLLIARAADVPVWVFPDRALCAQTMLVSHPGVNVLLLDDGLQHYRLQRDFEIVMFDSRMGGNGLMLPAGPLREPLSRPRDATLINDPNFRATPERPDVYGMRLDLDEAWQLNDPTMARPVSAFAGRRVLAAAGIGNPERFFASLRGAGLSPKTLPLPDHYDFAEDPFAGNPDALDADVILITEKDAVKCERFDDPRIWVVPTTPVIDAGLIDKIRRAVLARVPAAKSTPASGGATGLNKEHQDGQPAA</sequence>
<protein>
    <recommendedName>
        <fullName evidence="1">Tetraacyldisaccharide 4'-kinase</fullName>
        <ecNumber evidence="1">2.7.1.130</ecNumber>
    </recommendedName>
    <alternativeName>
        <fullName evidence="1">Lipid A 4'-kinase</fullName>
    </alternativeName>
</protein>
<organism>
    <name type="scientific">Cupriavidus pinatubonensis (strain JMP 134 / LMG 1197)</name>
    <name type="common">Cupriavidus necator (strain JMP 134)</name>
    <dbReference type="NCBI Taxonomy" id="264198"/>
    <lineage>
        <taxon>Bacteria</taxon>
        <taxon>Pseudomonadati</taxon>
        <taxon>Pseudomonadota</taxon>
        <taxon>Betaproteobacteria</taxon>
        <taxon>Burkholderiales</taxon>
        <taxon>Burkholderiaceae</taxon>
        <taxon>Cupriavidus</taxon>
    </lineage>
</organism>